<dbReference type="EC" id="7.3.2.5" evidence="1"/>
<dbReference type="EMBL" id="CR555306">
    <property type="protein sequence ID" value="CAI07650.1"/>
    <property type="molecule type" value="Genomic_DNA"/>
</dbReference>
<dbReference type="RefSeq" id="WP_011237365.1">
    <property type="nucleotide sequence ID" value="NC_006513.1"/>
</dbReference>
<dbReference type="SMR" id="Q5P4W2"/>
<dbReference type="STRING" id="76114.ebA2719"/>
<dbReference type="KEGG" id="eba:ebA2719"/>
<dbReference type="eggNOG" id="COG4148">
    <property type="taxonomic scope" value="Bacteria"/>
</dbReference>
<dbReference type="HOGENOM" id="CLU_000604_1_1_4"/>
<dbReference type="Proteomes" id="UP000006552">
    <property type="component" value="Chromosome"/>
</dbReference>
<dbReference type="GO" id="GO:0005886">
    <property type="term" value="C:plasma membrane"/>
    <property type="evidence" value="ECO:0007669"/>
    <property type="project" value="UniProtKB-SubCell"/>
</dbReference>
<dbReference type="GO" id="GO:0015412">
    <property type="term" value="F:ABC-type molybdate transporter activity"/>
    <property type="evidence" value="ECO:0007669"/>
    <property type="project" value="UniProtKB-EC"/>
</dbReference>
<dbReference type="GO" id="GO:0005524">
    <property type="term" value="F:ATP binding"/>
    <property type="evidence" value="ECO:0007669"/>
    <property type="project" value="UniProtKB-KW"/>
</dbReference>
<dbReference type="GO" id="GO:0016887">
    <property type="term" value="F:ATP hydrolysis activity"/>
    <property type="evidence" value="ECO:0007669"/>
    <property type="project" value="InterPro"/>
</dbReference>
<dbReference type="Gene3D" id="2.40.50.100">
    <property type="match status" value="1"/>
</dbReference>
<dbReference type="Gene3D" id="3.40.50.300">
    <property type="entry name" value="P-loop containing nucleotide triphosphate hydrolases"/>
    <property type="match status" value="1"/>
</dbReference>
<dbReference type="InterPro" id="IPR003593">
    <property type="entry name" value="AAA+_ATPase"/>
</dbReference>
<dbReference type="InterPro" id="IPR003439">
    <property type="entry name" value="ABC_transporter-like_ATP-bd"/>
</dbReference>
<dbReference type="InterPro" id="IPR017871">
    <property type="entry name" value="ABC_transporter-like_CS"/>
</dbReference>
<dbReference type="InterPro" id="IPR008995">
    <property type="entry name" value="Mo/tungstate-bd_C_term_dom"/>
</dbReference>
<dbReference type="InterPro" id="IPR011868">
    <property type="entry name" value="ModC_ABC_ATP-bd"/>
</dbReference>
<dbReference type="InterPro" id="IPR050334">
    <property type="entry name" value="Molybdenum_import_ModC"/>
</dbReference>
<dbReference type="InterPro" id="IPR004606">
    <property type="entry name" value="Mop_domain"/>
</dbReference>
<dbReference type="InterPro" id="IPR027417">
    <property type="entry name" value="P-loop_NTPase"/>
</dbReference>
<dbReference type="InterPro" id="IPR005116">
    <property type="entry name" value="Transp-assoc_OB_typ1"/>
</dbReference>
<dbReference type="NCBIfam" id="TIGR02142">
    <property type="entry name" value="modC_ABC"/>
    <property type="match status" value="1"/>
</dbReference>
<dbReference type="PANTHER" id="PTHR43514">
    <property type="entry name" value="ABC TRANSPORTER I FAMILY MEMBER 10"/>
    <property type="match status" value="1"/>
</dbReference>
<dbReference type="PANTHER" id="PTHR43514:SF10">
    <property type="entry name" value="MOLYBDENUM IMPORT ATP-BINDING PROTEIN MODC 2"/>
    <property type="match status" value="1"/>
</dbReference>
<dbReference type="Pfam" id="PF00005">
    <property type="entry name" value="ABC_tran"/>
    <property type="match status" value="1"/>
</dbReference>
<dbReference type="Pfam" id="PF03459">
    <property type="entry name" value="TOBE"/>
    <property type="match status" value="1"/>
</dbReference>
<dbReference type="SMART" id="SM00382">
    <property type="entry name" value="AAA"/>
    <property type="match status" value="1"/>
</dbReference>
<dbReference type="SUPFAM" id="SSF50331">
    <property type="entry name" value="MOP-like"/>
    <property type="match status" value="1"/>
</dbReference>
<dbReference type="SUPFAM" id="SSF52540">
    <property type="entry name" value="P-loop containing nucleoside triphosphate hydrolases"/>
    <property type="match status" value="1"/>
</dbReference>
<dbReference type="PROSITE" id="PS00211">
    <property type="entry name" value="ABC_TRANSPORTER_1"/>
    <property type="match status" value="1"/>
</dbReference>
<dbReference type="PROSITE" id="PS50893">
    <property type="entry name" value="ABC_TRANSPORTER_2"/>
    <property type="match status" value="1"/>
</dbReference>
<dbReference type="PROSITE" id="PS51241">
    <property type="entry name" value="MODC"/>
    <property type="match status" value="1"/>
</dbReference>
<dbReference type="PROSITE" id="PS51866">
    <property type="entry name" value="MOP"/>
    <property type="match status" value="1"/>
</dbReference>
<accession>Q5P4W2</accession>
<name>MODC_AROAE</name>
<organism>
    <name type="scientific">Aromatoleum aromaticum (strain DSM 19018 / LMG 30748 / EbN1)</name>
    <name type="common">Azoarcus sp. (strain EbN1)</name>
    <dbReference type="NCBI Taxonomy" id="76114"/>
    <lineage>
        <taxon>Bacteria</taxon>
        <taxon>Pseudomonadati</taxon>
        <taxon>Pseudomonadota</taxon>
        <taxon>Betaproteobacteria</taxon>
        <taxon>Rhodocyclales</taxon>
        <taxon>Rhodocyclaceae</taxon>
        <taxon>Aromatoleum</taxon>
    </lineage>
</organism>
<sequence length="377" mass="40796">MSGAVPFGAGAVRTGAITGDEAIRARFGLGWPGFRLDVDLALPGRGVIALFGHSGSGKTTLLRCLAGLERAADGYLAVRGELWQDEAQRLFVPTHRRPLGYVFQEASLFAHLTVRRNLEFGLKRVPAASRRIPLDQAIALLGIEPLLDRMSGRLSGGERQRVAIARALATSPRLLLMDEPLAALDVKRKQEILPYLERLHAELDIPVVYVSHAPEEVARLADHVVLLADGRALAAGPIGEVMARLDLPFAHDEDAFVVIDARVAAHDEAYALTRLEFAGLPLWITGLDMPLASRVRARVLARDVSLALTERHDSSILNVLPARVVSLDEADPGRTLVRLDVAGTALLARITRRSAAQLGIVPGRDVYAQVKGVALLR</sequence>
<reference key="1">
    <citation type="journal article" date="2005" name="Arch. Microbiol.">
        <title>The genome sequence of an anaerobic aromatic-degrading denitrifying bacterium, strain EbN1.</title>
        <authorList>
            <person name="Rabus R."/>
            <person name="Kube M."/>
            <person name="Heider J."/>
            <person name="Beck A."/>
            <person name="Heitmann K."/>
            <person name="Widdel F."/>
            <person name="Reinhardt R."/>
        </authorList>
    </citation>
    <scope>NUCLEOTIDE SEQUENCE [LARGE SCALE GENOMIC DNA]</scope>
    <source>
        <strain>DSM 19018 / LMG 30748 / EbN1</strain>
    </source>
</reference>
<protein>
    <recommendedName>
        <fullName evidence="1">Molybdenum import ATP-binding protein ModC</fullName>
        <ecNumber evidence="1">7.3.2.5</ecNumber>
    </recommendedName>
</protein>
<keyword id="KW-0067">ATP-binding</keyword>
<keyword id="KW-0997">Cell inner membrane</keyword>
<keyword id="KW-1003">Cell membrane</keyword>
<keyword id="KW-0472">Membrane</keyword>
<keyword id="KW-0500">Molybdenum</keyword>
<keyword id="KW-0547">Nucleotide-binding</keyword>
<keyword id="KW-1185">Reference proteome</keyword>
<keyword id="KW-1278">Translocase</keyword>
<keyword id="KW-0813">Transport</keyword>
<comment type="function">
    <text evidence="1">Part of the ABC transporter complex ModABC involved in molybdenum import. Responsible for energy coupling to the transport system.</text>
</comment>
<comment type="catalytic activity">
    <reaction evidence="1">
        <text>molybdate(out) + ATP + H2O = molybdate(in) + ADP + phosphate + H(+)</text>
        <dbReference type="Rhea" id="RHEA:22020"/>
        <dbReference type="ChEBI" id="CHEBI:15377"/>
        <dbReference type="ChEBI" id="CHEBI:15378"/>
        <dbReference type="ChEBI" id="CHEBI:30616"/>
        <dbReference type="ChEBI" id="CHEBI:36264"/>
        <dbReference type="ChEBI" id="CHEBI:43474"/>
        <dbReference type="ChEBI" id="CHEBI:456216"/>
        <dbReference type="EC" id="7.3.2.5"/>
    </reaction>
</comment>
<comment type="subunit">
    <text evidence="1">The complex is composed of two ATP-binding proteins (ModC), two transmembrane proteins (ModB) and a solute-binding protein (ModA).</text>
</comment>
<comment type="subcellular location">
    <subcellularLocation>
        <location evidence="1">Cell inner membrane</location>
        <topology evidence="1">Peripheral membrane protein</topology>
    </subcellularLocation>
</comment>
<comment type="similarity">
    <text evidence="1">Belongs to the ABC transporter superfamily. Molybdate importer (TC 3.A.1.8) family.</text>
</comment>
<feature type="chain" id="PRO_0000271669" description="Molybdenum import ATP-binding protein ModC">
    <location>
        <begin position="1"/>
        <end position="377"/>
    </location>
</feature>
<feature type="domain" description="ABC transporter" evidence="1">
    <location>
        <begin position="17"/>
        <end position="254"/>
    </location>
</feature>
<feature type="domain" description="Mop" evidence="2">
    <location>
        <begin position="313"/>
        <end position="377"/>
    </location>
</feature>
<feature type="binding site" evidence="1">
    <location>
        <begin position="52"/>
        <end position="59"/>
    </location>
    <ligand>
        <name>ATP</name>
        <dbReference type="ChEBI" id="CHEBI:30616"/>
    </ligand>
</feature>
<proteinExistence type="inferred from homology"/>
<gene>
    <name evidence="1" type="primary">modC</name>
    <name type="ordered locus">AZOSEA15250</name>
    <name type="ORF">ebA2719</name>
</gene>
<evidence type="ECO:0000255" key="1">
    <source>
        <dbReference type="HAMAP-Rule" id="MF_01705"/>
    </source>
</evidence>
<evidence type="ECO:0000255" key="2">
    <source>
        <dbReference type="PROSITE-ProRule" id="PRU01213"/>
    </source>
</evidence>